<gene>
    <name evidence="4" type="primary">Or7e178</name>
    <name evidence="4" type="synonym">Mor145-1</name>
    <name evidence="4" type="synonym">Olfr18</name>
</gene>
<feature type="chain" id="PRO_0000269660" description="Olfactory receptor 7E178">
    <location>
        <begin position="1"/>
        <end position="331"/>
    </location>
</feature>
<feature type="topological domain" description="Extracellular" evidence="1">
    <location>
        <begin position="1"/>
        <end position="47"/>
    </location>
</feature>
<feature type="transmembrane region" description="Helical; Name=1" evidence="1">
    <location>
        <begin position="48"/>
        <end position="68"/>
    </location>
</feature>
<feature type="topological domain" description="Cytoplasmic" evidence="1">
    <location>
        <begin position="69"/>
        <end position="80"/>
    </location>
</feature>
<feature type="transmembrane region" description="Helical; Name=2" evidence="1">
    <location>
        <begin position="81"/>
        <end position="100"/>
    </location>
</feature>
<feature type="topological domain" description="Extracellular" evidence="1">
    <location>
        <begin position="101"/>
        <end position="119"/>
    </location>
</feature>
<feature type="transmembrane region" description="Helical; Name=3" evidence="1">
    <location>
        <begin position="120"/>
        <end position="140"/>
    </location>
</feature>
<feature type="topological domain" description="Cytoplasmic" evidence="1">
    <location>
        <begin position="141"/>
        <end position="164"/>
    </location>
</feature>
<feature type="transmembrane region" description="Helical; Name=4" evidence="1">
    <location>
        <begin position="165"/>
        <end position="185"/>
    </location>
</feature>
<feature type="topological domain" description="Extracellular" evidence="1">
    <location>
        <begin position="186"/>
        <end position="218"/>
    </location>
</feature>
<feature type="transmembrane region" description="Helical; Name=5" evidence="1">
    <location>
        <begin position="219"/>
        <end position="239"/>
    </location>
</feature>
<feature type="topological domain" description="Cytoplasmic" evidence="1">
    <location>
        <begin position="240"/>
        <end position="266"/>
    </location>
</feature>
<feature type="transmembrane region" description="Helical; Name=6" evidence="1">
    <location>
        <begin position="267"/>
        <end position="287"/>
    </location>
</feature>
<feature type="topological domain" description="Extracellular" evidence="1">
    <location>
        <begin position="288"/>
        <end position="293"/>
    </location>
</feature>
<feature type="transmembrane region" description="Helical; Name=7" evidence="1">
    <location>
        <begin position="294"/>
        <end position="314"/>
    </location>
</feature>
<feature type="topological domain" description="Cytoplasmic" evidence="1">
    <location>
        <begin position="315"/>
        <end position="331"/>
    </location>
</feature>
<feature type="glycosylation site" description="N-linked (GlcNAc...) asparagine" evidence="1">
    <location>
        <position position="27"/>
    </location>
</feature>
<feature type="disulfide bond" evidence="2">
    <location>
        <begin position="119"/>
        <end position="201"/>
    </location>
</feature>
<feature type="sequence conflict" description="In Ref. 5; CAA61833." evidence="3" ref="5">
    <original>A</original>
    <variation>T</variation>
    <location>
        <position position="226"/>
    </location>
</feature>
<reference key="1">
    <citation type="journal article" date="2004" name="Genome Res.">
        <title>The status, quality, and expansion of the NIH full-length cDNA project: the Mammalian Gene Collection (MGC).</title>
        <authorList>
            <consortium name="The MGC Project Team"/>
        </authorList>
    </citation>
    <scope>NUCLEOTIDE SEQUENCE [LARGE SCALE MRNA]</scope>
    <source>
        <tissue>Brain</tissue>
    </source>
</reference>
<reference key="2">
    <citation type="journal article" date="2002" name="Hum. Mol. Genet.">
        <title>Different evolutionary processes shaped the mouse and human olfactory receptor gene families.</title>
        <authorList>
            <person name="Young J.M."/>
            <person name="Friedman C."/>
            <person name="Williams E.M."/>
            <person name="Ross J.A."/>
            <person name="Tonnes-Priddy L."/>
            <person name="Trask B.J."/>
        </authorList>
    </citation>
    <scope>NUCLEOTIDE SEQUENCE [GENOMIC DNA] OF 23-331</scope>
</reference>
<reference key="3">
    <citation type="journal article" date="2002" name="Hum. Mol. Genet.">
        <authorList>
            <person name="Young J.M."/>
            <person name="Friedman C."/>
            <person name="Williams E.M."/>
            <person name="Ross J.A."/>
            <person name="Tonnes-Priddy L."/>
            <person name="Trask B.J."/>
        </authorList>
    </citation>
    <scope>ERRATUM OF PUBMED:11875048</scope>
</reference>
<reference key="4">
    <citation type="journal article" date="2002" name="Nat. Neurosci.">
        <title>The olfactory receptor gene superfamily of the mouse.</title>
        <authorList>
            <person name="Zhang X."/>
            <person name="Firestein S."/>
        </authorList>
    </citation>
    <scope>NUCLEOTIDE SEQUENCE [GENOMIC DNA] OF 37-331</scope>
</reference>
<reference key="5">
    <citation type="journal article" date="1997" name="Genomics">
        <title>Specific repertoire of olfactory receptor genes in the male germ cells of several mammalian species.</title>
        <authorList>
            <person name="Vanderhaeghen P."/>
            <person name="Schurmans S."/>
            <person name="Vassart G."/>
            <person name="Parmentier M."/>
        </authorList>
    </citation>
    <scope>NUCLEOTIDE SEQUENCE [MRNA] OF 148-304</scope>
    <source>
        <tissue>Testis</tissue>
    </source>
</reference>
<dbReference type="EMBL" id="BC120866">
    <property type="protein sequence ID" value="AAI20867.2"/>
    <property type="molecule type" value="mRNA"/>
</dbReference>
<dbReference type="EMBL" id="BC120868">
    <property type="protein sequence ID" value="AAI20869.2"/>
    <property type="molecule type" value="mRNA"/>
</dbReference>
<dbReference type="EMBL" id="AY318053">
    <property type="protein sequence ID" value="AAP71350.1"/>
    <property type="molecule type" value="Genomic_DNA"/>
</dbReference>
<dbReference type="EMBL" id="AY073534">
    <property type="protein sequence ID" value="AAL61197.1"/>
    <property type="molecule type" value="Genomic_DNA"/>
</dbReference>
<dbReference type="EMBL" id="X89686">
    <property type="protein sequence ID" value="CAA61833.1"/>
    <property type="molecule type" value="mRNA"/>
</dbReference>
<dbReference type="CCDS" id="CCDS40542.1"/>
<dbReference type="PIR" id="S58067">
    <property type="entry name" value="S58067"/>
</dbReference>
<dbReference type="RefSeq" id="NP_666774.1">
    <property type="nucleotide sequence ID" value="NM_146563.2"/>
</dbReference>
<dbReference type="SMR" id="Q0VAX9"/>
<dbReference type="FunCoup" id="Q0VAX9">
    <property type="interactions" value="1330"/>
</dbReference>
<dbReference type="STRING" id="10090.ENSMUSP00000083664"/>
<dbReference type="GlyCosmos" id="Q0VAX9">
    <property type="glycosylation" value="1 site, No reported glycans"/>
</dbReference>
<dbReference type="GlyGen" id="Q0VAX9">
    <property type="glycosylation" value="1 site"/>
</dbReference>
<dbReference type="PhosphoSitePlus" id="Q0VAX9"/>
<dbReference type="PaxDb" id="10090-ENSMUSP00000083664"/>
<dbReference type="Ensembl" id="ENSMUST00000086473.4">
    <property type="protein sequence ID" value="ENSMUSP00000083664.4"/>
    <property type="gene ID" value="ENSMUSG00000066896.7"/>
</dbReference>
<dbReference type="GeneID" id="18315"/>
<dbReference type="KEGG" id="mmu:18315"/>
<dbReference type="UCSC" id="uc009oii.1">
    <property type="organism name" value="mouse"/>
</dbReference>
<dbReference type="AGR" id="MGI:109317"/>
<dbReference type="CTD" id="18315"/>
<dbReference type="MGI" id="MGI:109317">
    <property type="gene designation" value="Or7e178"/>
</dbReference>
<dbReference type="VEuPathDB" id="HostDB:ENSMUSG00000066896"/>
<dbReference type="eggNOG" id="ENOG502T9MT">
    <property type="taxonomic scope" value="Eukaryota"/>
</dbReference>
<dbReference type="GeneTree" id="ENSGT00940000153277"/>
<dbReference type="HOGENOM" id="CLU_012526_5_5_1"/>
<dbReference type="InParanoid" id="Q0VAX9"/>
<dbReference type="OMA" id="VEIAHFF"/>
<dbReference type="OrthoDB" id="9444602at2759"/>
<dbReference type="PhylomeDB" id="Q0VAX9"/>
<dbReference type="TreeFam" id="TF337210"/>
<dbReference type="BioGRID-ORCS" id="18315">
    <property type="hits" value="0 hits in 71 CRISPR screens"/>
</dbReference>
<dbReference type="PRO" id="PR:Q0VAX9"/>
<dbReference type="Proteomes" id="UP000000589">
    <property type="component" value="Chromosome 9"/>
</dbReference>
<dbReference type="RNAct" id="Q0VAX9">
    <property type="molecule type" value="protein"/>
</dbReference>
<dbReference type="ExpressionAtlas" id="Q0VAX9">
    <property type="expression patterns" value="differential"/>
</dbReference>
<dbReference type="GO" id="GO:0016020">
    <property type="term" value="C:membrane"/>
    <property type="evidence" value="ECO:0000247"/>
    <property type="project" value="MGI"/>
</dbReference>
<dbReference type="GO" id="GO:0005886">
    <property type="term" value="C:plasma membrane"/>
    <property type="evidence" value="ECO:0007669"/>
    <property type="project" value="UniProtKB-SubCell"/>
</dbReference>
<dbReference type="GO" id="GO:0004930">
    <property type="term" value="F:G protein-coupled receptor activity"/>
    <property type="evidence" value="ECO:0007669"/>
    <property type="project" value="UniProtKB-KW"/>
</dbReference>
<dbReference type="GO" id="GO:0004984">
    <property type="term" value="F:olfactory receptor activity"/>
    <property type="evidence" value="ECO:0000247"/>
    <property type="project" value="MGI"/>
</dbReference>
<dbReference type="GO" id="GO:0007186">
    <property type="term" value="P:G protein-coupled receptor signaling pathway"/>
    <property type="evidence" value="ECO:0000247"/>
    <property type="project" value="MGI"/>
</dbReference>
<dbReference type="GO" id="GO:0007608">
    <property type="term" value="P:sensory perception of smell"/>
    <property type="evidence" value="ECO:0000247"/>
    <property type="project" value="MGI"/>
</dbReference>
<dbReference type="CDD" id="cd15234">
    <property type="entry name" value="7tmA_OR7-like"/>
    <property type="match status" value="1"/>
</dbReference>
<dbReference type="FunFam" id="1.20.1070.10:FF:000009">
    <property type="entry name" value="Olfactory receptor"/>
    <property type="match status" value="1"/>
</dbReference>
<dbReference type="Gene3D" id="1.20.1070.10">
    <property type="entry name" value="Rhodopsin 7-helix transmembrane proteins"/>
    <property type="match status" value="1"/>
</dbReference>
<dbReference type="InterPro" id="IPR000276">
    <property type="entry name" value="GPCR_Rhodpsn"/>
</dbReference>
<dbReference type="InterPro" id="IPR017452">
    <property type="entry name" value="GPCR_Rhodpsn_7TM"/>
</dbReference>
<dbReference type="InterPro" id="IPR000725">
    <property type="entry name" value="Olfact_rcpt"/>
</dbReference>
<dbReference type="PANTHER" id="PTHR48001">
    <property type="entry name" value="OLFACTORY RECEPTOR"/>
    <property type="match status" value="1"/>
</dbReference>
<dbReference type="Pfam" id="PF13853">
    <property type="entry name" value="7tm_4"/>
    <property type="match status" value="1"/>
</dbReference>
<dbReference type="PRINTS" id="PR00237">
    <property type="entry name" value="GPCRRHODOPSN"/>
</dbReference>
<dbReference type="PRINTS" id="PR00245">
    <property type="entry name" value="OLFACTORYR"/>
</dbReference>
<dbReference type="SUPFAM" id="SSF81321">
    <property type="entry name" value="Family A G protein-coupled receptor-like"/>
    <property type="match status" value="1"/>
</dbReference>
<dbReference type="PROSITE" id="PS00237">
    <property type="entry name" value="G_PROTEIN_RECEP_F1_1"/>
    <property type="match status" value="1"/>
</dbReference>
<dbReference type="PROSITE" id="PS50262">
    <property type="entry name" value="G_PROTEIN_RECEP_F1_2"/>
    <property type="match status" value="1"/>
</dbReference>
<sequence>MMDRYSFIMHQHRDDTVWCPSKIEEQNITRISEFHLMGLSDDLQLQPILFGLFLSMYLVTLLGNLLIILTVSSDSHLHSPMYFFLSNLSLADVSFTSTTLPKMIVDIQTHNRAISYSGCLTQMSFFMLFGCLDSLLLTAMAYDRFVAICHPLHYQFIMNPRLCGLLVFLSVLISLFVSQLHNSVVLQLTYFKSVDISHFFCDPSQLLNLACSDTFTNNIVMYFVGAISGFLPISGIFFSYYKIVSSILRMPSPGGKYKAFSTCGSHLSVVCLFYGTGLGVYLSSAVSLSPRKGAVASIVYTVVTPMLNPFIYSLRNQDIKRAMWRLLRKTV</sequence>
<protein>
    <recommendedName>
        <fullName evidence="3">Olfactory receptor 7E178</fullName>
    </recommendedName>
    <alternativeName>
        <fullName>Olfactory receptor 145-1</fullName>
    </alternativeName>
    <alternativeName>
        <fullName>Olfactory receptor 18</fullName>
    </alternativeName>
    <alternativeName>
        <fullName>Olfactory receptor TPCR34</fullName>
    </alternativeName>
</protein>
<keyword id="KW-1003">Cell membrane</keyword>
<keyword id="KW-1015">Disulfide bond</keyword>
<keyword id="KW-0297">G-protein coupled receptor</keyword>
<keyword id="KW-0325">Glycoprotein</keyword>
<keyword id="KW-0472">Membrane</keyword>
<keyword id="KW-0552">Olfaction</keyword>
<keyword id="KW-0675">Receptor</keyword>
<keyword id="KW-1185">Reference proteome</keyword>
<keyword id="KW-0716">Sensory transduction</keyword>
<keyword id="KW-0807">Transducer</keyword>
<keyword id="KW-0812">Transmembrane</keyword>
<keyword id="KW-1133">Transmembrane helix</keyword>
<name>O7178_MOUSE</name>
<proteinExistence type="evidence at transcript level"/>
<comment type="function">
    <text evidence="3">Odorant receptor.</text>
</comment>
<comment type="subcellular location">
    <subcellularLocation>
        <location evidence="3">Cell membrane</location>
        <topology evidence="1">Multi-pass membrane protein</topology>
    </subcellularLocation>
</comment>
<comment type="similarity">
    <text evidence="2">Belongs to the G-protein coupled receptor 1 family.</text>
</comment>
<accession>Q0VAX9</accession>
<accession>Q62337</accession>
<accession>Q7TRE8</accession>
<accession>Q8VFJ2</accession>
<evidence type="ECO:0000255" key="1"/>
<evidence type="ECO:0000255" key="2">
    <source>
        <dbReference type="PROSITE-ProRule" id="PRU00521"/>
    </source>
</evidence>
<evidence type="ECO:0000305" key="3"/>
<evidence type="ECO:0000312" key="4">
    <source>
        <dbReference type="MGI" id="MGI:109317"/>
    </source>
</evidence>
<organism>
    <name type="scientific">Mus musculus</name>
    <name type="common">Mouse</name>
    <dbReference type="NCBI Taxonomy" id="10090"/>
    <lineage>
        <taxon>Eukaryota</taxon>
        <taxon>Metazoa</taxon>
        <taxon>Chordata</taxon>
        <taxon>Craniata</taxon>
        <taxon>Vertebrata</taxon>
        <taxon>Euteleostomi</taxon>
        <taxon>Mammalia</taxon>
        <taxon>Eutheria</taxon>
        <taxon>Euarchontoglires</taxon>
        <taxon>Glires</taxon>
        <taxon>Rodentia</taxon>
        <taxon>Myomorpha</taxon>
        <taxon>Muroidea</taxon>
        <taxon>Muridae</taxon>
        <taxon>Murinae</taxon>
        <taxon>Mus</taxon>
        <taxon>Mus</taxon>
    </lineage>
</organism>